<gene>
    <name evidence="6" type="primary">Tas2r110</name>
</gene>
<sequence>MFSQIISTSDIFTFTIILFVELVIGILGNGFIALVNIMDWTKRRSISSADQILTALAITRFLYVWFMIICILLFMLCPHLLTRSEIVTSIGIIWIVNNHFSVWLATCLGVFYFLKIANFSNSLFLYLKWRVKKVVLMIIQVSMIFLILNLLSLSMYDQFSIDVYEGNTSYNLGDSTPFPTISLFINSSKVFVITNSSHIFLPINSLFMLIPFTVSLVAFLMLIFSLWKHHKKMQVNAKPPRDASTMAHIKALQTGFSFLLLYAVYLLFIVIGMLSLRLIGGKLILLFDHISGIGFPISHSFVLILGNNKLRQASLSVLHCLRCRSKDMDTMGP</sequence>
<accession>Q7M712</accession>
<accession>Q71QD1</accession>
<feature type="chain" id="PRO_0000247660" description="Taste receptor type 2 member 110">
    <location>
        <begin position="1"/>
        <end position="333"/>
    </location>
</feature>
<feature type="topological domain" description="Extracellular" evidence="2">
    <location>
        <begin position="1"/>
        <end position="13"/>
    </location>
</feature>
<feature type="transmembrane region" description="Helical; Name=1" evidence="2">
    <location>
        <begin position="14"/>
        <end position="34"/>
    </location>
</feature>
<feature type="topological domain" description="Cytoplasmic" evidence="2">
    <location>
        <begin position="35"/>
        <end position="60"/>
    </location>
</feature>
<feature type="transmembrane region" description="Helical; Name=2" evidence="2">
    <location>
        <begin position="61"/>
        <end position="81"/>
    </location>
</feature>
<feature type="topological domain" description="Extracellular" evidence="2">
    <location>
        <begin position="82"/>
        <end position="89"/>
    </location>
</feature>
<feature type="transmembrane region" description="Helical; Name=3" evidence="2">
    <location>
        <begin position="90"/>
        <end position="110"/>
    </location>
</feature>
<feature type="topological domain" description="Cytoplasmic" evidence="2">
    <location>
        <begin position="111"/>
        <end position="133"/>
    </location>
</feature>
<feature type="transmembrane region" description="Helical; Name=4" evidence="2">
    <location>
        <begin position="134"/>
        <end position="154"/>
    </location>
</feature>
<feature type="topological domain" description="Extracellular" evidence="2">
    <location>
        <begin position="155"/>
        <end position="205"/>
    </location>
</feature>
<feature type="transmembrane region" description="Helical; Name=5" evidence="2">
    <location>
        <begin position="206"/>
        <end position="226"/>
    </location>
</feature>
<feature type="topological domain" description="Cytoplasmic" evidence="2">
    <location>
        <begin position="227"/>
        <end position="255"/>
    </location>
</feature>
<feature type="transmembrane region" description="Helical; Name=6" evidence="2">
    <location>
        <begin position="256"/>
        <end position="276"/>
    </location>
</feature>
<feature type="topological domain" description="Extracellular" evidence="2">
    <location>
        <begin position="277"/>
        <end position="283"/>
    </location>
</feature>
<feature type="transmembrane region" description="Helical; Name=7" evidence="2">
    <location>
        <begin position="284"/>
        <end position="304"/>
    </location>
</feature>
<feature type="topological domain" description="Cytoplasmic" evidence="2">
    <location>
        <begin position="305"/>
        <end position="333"/>
    </location>
</feature>
<feature type="glycosylation site" description="N-linked (GlcNAc...) asparagine" evidence="2">
    <location>
        <position position="186"/>
    </location>
</feature>
<feature type="glycosylation site" description="N-linked (GlcNAc...) asparagine" evidence="2">
    <location>
        <position position="195"/>
    </location>
</feature>
<feature type="sequence conflict" description="In Ref. 1; AAL85201." evidence="3" ref="1">
    <original>L</original>
    <variation>V</variation>
    <location>
        <position position="151"/>
    </location>
</feature>
<feature type="sequence conflict" description="In Ref. 1; AAL85201." evidence="3" ref="1">
    <original>S</original>
    <variation>F</variation>
    <location>
        <position position="169"/>
    </location>
</feature>
<feature type="sequence conflict" description="In Ref. 1; AAL85201." evidence="3" ref="1">
    <original>H</original>
    <variation>R</variation>
    <location>
        <position position="230"/>
    </location>
</feature>
<feature type="sequence conflict" description="In Ref. 1; AAL85201." evidence="3" ref="1">
    <original>F</original>
    <variation>L</variation>
    <location>
        <position position="256"/>
    </location>
</feature>
<protein>
    <recommendedName>
        <fullName>Taste receptor type 2 member 110</fullName>
        <shortName>T2R110</shortName>
        <shortName>mT2r57</shortName>
    </recommendedName>
    <alternativeName>
        <fullName>STC 9-1</fullName>
    </alternativeName>
</protein>
<name>TR110_MOUSE</name>
<comment type="function">
    <text evidence="1">Gustducin-coupled receptor implicated in the perception of bitter compounds in the oral cavity and the gastrointestinal tract. Signals through PLCB2 and the calcium-regulated cation channel TRPM5 (By similarity).</text>
</comment>
<comment type="subcellular location">
    <subcellularLocation>
        <location evidence="3">Membrane</location>
        <topology evidence="3">Multi-pass membrane protein</topology>
    </subcellularLocation>
</comment>
<comment type="miscellaneous">
    <text evidence="3">Several bitter taste receptors with distinct ligand specificities are expressed in a single taste receptor cell.</text>
</comment>
<comment type="similarity">
    <text evidence="2">Belongs to the G-protein coupled receptor T2R family.</text>
</comment>
<dbReference type="EMBL" id="AF412304">
    <property type="protein sequence ID" value="AAL85201.1"/>
    <property type="molecule type" value="Genomic_DNA"/>
</dbReference>
<dbReference type="EMBL" id="AC129318">
    <property type="status" value="NOT_ANNOTATED_CDS"/>
    <property type="molecule type" value="Genomic_DNA"/>
</dbReference>
<dbReference type="EMBL" id="BK001085">
    <property type="protein sequence ID" value="DAA01224.1"/>
    <property type="molecule type" value="Genomic_DNA"/>
</dbReference>
<dbReference type="CCDS" id="CCDS20626.1"/>
<dbReference type="RefSeq" id="NP_954606.2">
    <property type="nucleotide sequence ID" value="NM_199155.2"/>
</dbReference>
<dbReference type="SMR" id="Q7M712"/>
<dbReference type="FunCoup" id="Q7M712">
    <property type="interactions" value="88"/>
</dbReference>
<dbReference type="STRING" id="10090.ENSMUSP00000080674"/>
<dbReference type="GlyCosmos" id="Q7M712">
    <property type="glycosylation" value="2 sites, No reported glycans"/>
</dbReference>
<dbReference type="GlyGen" id="Q7M712">
    <property type="glycosylation" value="2 sites"/>
</dbReference>
<dbReference type="jPOST" id="Q7M712"/>
<dbReference type="PaxDb" id="10090-ENSMUSP00000080674"/>
<dbReference type="DNASU" id="387344"/>
<dbReference type="Ensembl" id="ENSMUST00000082014.2">
    <property type="protein sequence ID" value="ENSMUSP00000080674.2"/>
    <property type="gene ID" value="ENSMUSG00000062952.2"/>
</dbReference>
<dbReference type="GeneID" id="387344"/>
<dbReference type="KEGG" id="mmu:387344"/>
<dbReference type="UCSC" id="uc009ejs.1">
    <property type="organism name" value="mouse"/>
</dbReference>
<dbReference type="AGR" id="MGI:2681216"/>
<dbReference type="CTD" id="387344"/>
<dbReference type="MGI" id="MGI:2681216">
    <property type="gene designation" value="Tas2r110"/>
</dbReference>
<dbReference type="VEuPathDB" id="HostDB:ENSMUSG00000062952"/>
<dbReference type="eggNOG" id="ENOG502SKRK">
    <property type="taxonomic scope" value="Eukaryota"/>
</dbReference>
<dbReference type="GeneTree" id="ENSGT01100000263477"/>
<dbReference type="HOGENOM" id="CLU_072337_3_0_1"/>
<dbReference type="InParanoid" id="Q7M712"/>
<dbReference type="OMA" id="LRMINIF"/>
<dbReference type="OrthoDB" id="8876749at2759"/>
<dbReference type="PhylomeDB" id="Q7M712"/>
<dbReference type="TreeFam" id="TF335891"/>
<dbReference type="BioGRID-ORCS" id="387344">
    <property type="hits" value="3 hits in 75 CRISPR screens"/>
</dbReference>
<dbReference type="PRO" id="PR:Q7M712"/>
<dbReference type="Proteomes" id="UP000000589">
    <property type="component" value="Chromosome 6"/>
</dbReference>
<dbReference type="RNAct" id="Q7M712">
    <property type="molecule type" value="protein"/>
</dbReference>
<dbReference type="GO" id="GO:0016020">
    <property type="term" value="C:membrane"/>
    <property type="evidence" value="ECO:0007669"/>
    <property type="project" value="UniProtKB-SubCell"/>
</dbReference>
<dbReference type="GO" id="GO:0033038">
    <property type="term" value="F:bitter taste receptor activity"/>
    <property type="evidence" value="ECO:0007669"/>
    <property type="project" value="InterPro"/>
</dbReference>
<dbReference type="GO" id="GO:0004930">
    <property type="term" value="F:G protein-coupled receptor activity"/>
    <property type="evidence" value="ECO:0007669"/>
    <property type="project" value="UniProtKB-KW"/>
</dbReference>
<dbReference type="GO" id="GO:0001580">
    <property type="term" value="P:detection of chemical stimulus involved in sensory perception of bitter taste"/>
    <property type="evidence" value="ECO:0000304"/>
    <property type="project" value="MGI"/>
</dbReference>
<dbReference type="CDD" id="cd15019">
    <property type="entry name" value="7tm_TAS2R14-like"/>
    <property type="match status" value="1"/>
</dbReference>
<dbReference type="FunFam" id="1.20.1070.10:FF:000042">
    <property type="entry name" value="Taste receptor type 2 member 7"/>
    <property type="match status" value="1"/>
</dbReference>
<dbReference type="Gene3D" id="1.20.1070.10">
    <property type="entry name" value="Rhodopsin 7-helix transmembrane proteins"/>
    <property type="match status" value="1"/>
</dbReference>
<dbReference type="InterPro" id="IPR007960">
    <property type="entry name" value="TAS2R"/>
</dbReference>
<dbReference type="PANTHER" id="PTHR11394">
    <property type="entry name" value="TASTE RECEPTOR TYPE 2"/>
    <property type="match status" value="1"/>
</dbReference>
<dbReference type="PANTHER" id="PTHR11394:SF37">
    <property type="entry name" value="TASTE RECEPTOR TYPE 2 MEMBER 110"/>
    <property type="match status" value="1"/>
</dbReference>
<dbReference type="Pfam" id="PF05296">
    <property type="entry name" value="TAS2R"/>
    <property type="match status" value="1"/>
</dbReference>
<dbReference type="SUPFAM" id="SSF81321">
    <property type="entry name" value="Family A G protein-coupled receptor-like"/>
    <property type="match status" value="1"/>
</dbReference>
<organism>
    <name type="scientific">Mus musculus</name>
    <name type="common">Mouse</name>
    <dbReference type="NCBI Taxonomy" id="10090"/>
    <lineage>
        <taxon>Eukaryota</taxon>
        <taxon>Metazoa</taxon>
        <taxon>Chordata</taxon>
        <taxon>Craniata</taxon>
        <taxon>Vertebrata</taxon>
        <taxon>Euteleostomi</taxon>
        <taxon>Mammalia</taxon>
        <taxon>Eutheria</taxon>
        <taxon>Euarchontoglires</taxon>
        <taxon>Glires</taxon>
        <taxon>Rodentia</taxon>
        <taxon>Myomorpha</taxon>
        <taxon>Muroidea</taxon>
        <taxon>Muridae</taxon>
        <taxon>Murinae</taxon>
        <taxon>Mus</taxon>
        <taxon>Mus</taxon>
    </lineage>
</organism>
<proteinExistence type="inferred from homology"/>
<evidence type="ECO:0000250" key="1">
    <source>
        <dbReference type="UniProtKB" id="Q9JKE8"/>
    </source>
</evidence>
<evidence type="ECO:0000255" key="2"/>
<evidence type="ECO:0000305" key="3"/>
<evidence type="ECO:0000312" key="4">
    <source>
        <dbReference type="EMBL" id="AAL85201.1"/>
    </source>
</evidence>
<evidence type="ECO:0000312" key="5">
    <source>
        <dbReference type="EMBL" id="DAA01224.1"/>
    </source>
</evidence>
<evidence type="ECO:0000312" key="6">
    <source>
        <dbReference type="MGI" id="MGI:2681216"/>
    </source>
</evidence>
<keyword id="KW-0297">G-protein coupled receptor</keyword>
<keyword id="KW-0325">Glycoprotein</keyword>
<keyword id="KW-0472">Membrane</keyword>
<keyword id="KW-0675">Receptor</keyword>
<keyword id="KW-1185">Reference proteome</keyword>
<keyword id="KW-0716">Sensory transduction</keyword>
<keyword id="KW-0919">Taste</keyword>
<keyword id="KW-0807">Transducer</keyword>
<keyword id="KW-0812">Transmembrane</keyword>
<keyword id="KW-1133">Transmembrane helix</keyword>
<reference evidence="4" key="1">
    <citation type="journal article" date="2002" name="Proc. Natl. Acad. Sci. U.S.A.">
        <title>Expression of bitter taste receptors of the T2R family in the gastrointestinal tract and enteroendocrine STC-1 cells.</title>
        <authorList>
            <person name="Wu S.V."/>
            <person name="Rozengurt N."/>
            <person name="Yang M."/>
            <person name="Young S.H."/>
            <person name="Sinnett-Smith J."/>
            <person name="Rozengurt E."/>
        </authorList>
    </citation>
    <scope>NUCLEOTIDE SEQUENCE [GENOMIC DNA]</scope>
</reference>
<reference key="2">
    <citation type="journal article" date="2009" name="PLoS Biol.">
        <title>Lineage-specific biology revealed by a finished genome assembly of the mouse.</title>
        <authorList>
            <person name="Church D.M."/>
            <person name="Goodstadt L."/>
            <person name="Hillier L.W."/>
            <person name="Zody M.C."/>
            <person name="Goldstein S."/>
            <person name="She X."/>
            <person name="Bult C.J."/>
            <person name="Agarwala R."/>
            <person name="Cherry J.L."/>
            <person name="DiCuccio M."/>
            <person name="Hlavina W."/>
            <person name="Kapustin Y."/>
            <person name="Meric P."/>
            <person name="Maglott D."/>
            <person name="Birtle Z."/>
            <person name="Marques A.C."/>
            <person name="Graves T."/>
            <person name="Zhou S."/>
            <person name="Teague B."/>
            <person name="Potamousis K."/>
            <person name="Churas C."/>
            <person name="Place M."/>
            <person name="Herschleb J."/>
            <person name="Runnheim R."/>
            <person name="Forrest D."/>
            <person name="Amos-Landgraf J."/>
            <person name="Schwartz D.C."/>
            <person name="Cheng Z."/>
            <person name="Lindblad-Toh K."/>
            <person name="Eichler E.E."/>
            <person name="Ponting C.P."/>
        </authorList>
    </citation>
    <scope>NUCLEOTIDE SEQUENCE [LARGE SCALE GENOMIC DNA]</scope>
    <source>
        <strain>C57BL/6J</strain>
    </source>
</reference>
<reference evidence="3 5" key="3">
    <citation type="journal article" date="2003" name="Mol. Biol. Evol.">
        <title>Adaptive diversification of bitter taste receptor genes in mammalian evolution.</title>
        <authorList>
            <person name="Shi P."/>
            <person name="Zhang J."/>
            <person name="Yang H."/>
            <person name="Zhang Y.-P."/>
        </authorList>
    </citation>
    <scope>IDENTIFICATION</scope>
</reference>